<comment type="function">
    <text evidence="2">Component of the large ribosomal subunit. The ribosome is a large ribonucleoprotein complex responsible for the synthesis of proteins in the cell.</text>
</comment>
<comment type="subunit">
    <text evidence="2">Component of the large ribosomal subunit.</text>
</comment>
<comment type="subcellular location">
    <subcellularLocation>
        <location>Cytoplasm</location>
    </subcellularLocation>
</comment>
<comment type="similarity">
    <text evidence="4">Belongs to the universal ribosomal protein uL2 family.</text>
</comment>
<reference key="1">
    <citation type="submission" date="2004-01" db="EMBL/GenBank/DDBJ databases">
        <authorList>
            <consortium name="NIH - Zebrafish Gene Collection (ZGC) project"/>
        </authorList>
    </citation>
    <scope>NUCLEOTIDE SEQUENCE [LARGE SCALE MRNA]</scope>
    <source>
        <tissue>Eye</tissue>
    </source>
</reference>
<dbReference type="EMBL" id="BC059473">
    <property type="protein sequence ID" value="AAH59473.1"/>
    <property type="molecule type" value="mRNA"/>
</dbReference>
<dbReference type="EMBL" id="BC065432">
    <property type="protein sequence ID" value="AAH65432.1"/>
    <property type="molecule type" value="mRNA"/>
</dbReference>
<dbReference type="RefSeq" id="NP_957007.1">
    <property type="nucleotide sequence ID" value="NM_200713.1"/>
</dbReference>
<dbReference type="RefSeq" id="XP_005167741.1">
    <property type="nucleotide sequence ID" value="XM_005167684.1"/>
</dbReference>
<dbReference type="PDB" id="7OYA">
    <property type="method" value="EM"/>
    <property type="resolution" value="3.20 A"/>
    <property type="chains" value="A1=1-257"/>
</dbReference>
<dbReference type="PDB" id="7OYB">
    <property type="method" value="EM"/>
    <property type="resolution" value="2.40 A"/>
    <property type="chains" value="A1=1-257"/>
</dbReference>
<dbReference type="PDBsum" id="7OYA"/>
<dbReference type="PDBsum" id="7OYB"/>
<dbReference type="EMDB" id="EMD-13111"/>
<dbReference type="EMDB" id="EMD-13112"/>
<dbReference type="SMR" id="Q6P0V6"/>
<dbReference type="FunCoup" id="Q6P0V6">
    <property type="interactions" value="2159"/>
</dbReference>
<dbReference type="STRING" id="7955.ENSDARP00000115147"/>
<dbReference type="PaxDb" id="7955-ENSDARP00000115147"/>
<dbReference type="Ensembl" id="ENSDART00000006948">
    <property type="protein sequence ID" value="ENSDARP00000005651"/>
    <property type="gene ID" value="ENSDARG00000014867"/>
</dbReference>
<dbReference type="Ensembl" id="ENSDART00000140039">
    <property type="protein sequence ID" value="ENSDARP00000115147"/>
    <property type="gene ID" value="ENSDARG00000014867"/>
</dbReference>
<dbReference type="GeneID" id="393686"/>
<dbReference type="KEGG" id="dre:393686"/>
<dbReference type="AGR" id="ZFIN:ZDB-GENE-040426-1670"/>
<dbReference type="CTD" id="6132"/>
<dbReference type="ZFIN" id="ZDB-GENE-040426-1670">
    <property type="gene designation" value="rpl8"/>
</dbReference>
<dbReference type="eggNOG" id="KOG2309">
    <property type="taxonomic scope" value="Eukaryota"/>
</dbReference>
<dbReference type="HOGENOM" id="CLU_036235_0_3_1"/>
<dbReference type="InParanoid" id="Q6P0V6"/>
<dbReference type="OMA" id="GGRHPCT"/>
<dbReference type="OrthoDB" id="10267824at2759"/>
<dbReference type="PhylomeDB" id="Q6P0V6"/>
<dbReference type="TreeFam" id="TF300748"/>
<dbReference type="Reactome" id="R-DRE-156827">
    <property type="pathway name" value="L13a-mediated translational silencing of Ceruloplasmin expression"/>
</dbReference>
<dbReference type="Reactome" id="R-DRE-1799339">
    <property type="pathway name" value="SRP-dependent cotranslational protein targeting to membrane"/>
</dbReference>
<dbReference type="Reactome" id="R-DRE-72689">
    <property type="pathway name" value="Formation of a pool of free 40S subunits"/>
</dbReference>
<dbReference type="Reactome" id="R-DRE-9629569">
    <property type="pathway name" value="Protein hydroxylation"/>
</dbReference>
<dbReference type="Reactome" id="R-DRE-975956">
    <property type="pathway name" value="Nonsense Mediated Decay (NMD) independent of the Exon Junction Complex (EJC)"/>
</dbReference>
<dbReference type="Reactome" id="R-DRE-975957">
    <property type="pathway name" value="Nonsense Mediated Decay (NMD) enhanced by the Exon Junction Complex (EJC)"/>
</dbReference>
<dbReference type="PRO" id="PR:Q6P0V6"/>
<dbReference type="Proteomes" id="UP000000437">
    <property type="component" value="Chromosome 9"/>
</dbReference>
<dbReference type="Bgee" id="ENSDARG00000014867">
    <property type="expression patterns" value="Expressed in somite and 33 other cell types or tissues"/>
</dbReference>
<dbReference type="ExpressionAtlas" id="Q6P0V6">
    <property type="expression patterns" value="baseline and differential"/>
</dbReference>
<dbReference type="GO" id="GO:0022625">
    <property type="term" value="C:cytosolic large ribosomal subunit"/>
    <property type="evidence" value="ECO:0000318"/>
    <property type="project" value="GO_Central"/>
</dbReference>
<dbReference type="GO" id="GO:0003723">
    <property type="term" value="F:RNA binding"/>
    <property type="evidence" value="ECO:0000318"/>
    <property type="project" value="GO_Central"/>
</dbReference>
<dbReference type="GO" id="GO:0019843">
    <property type="term" value="F:rRNA binding"/>
    <property type="evidence" value="ECO:0007669"/>
    <property type="project" value="UniProtKB-KW"/>
</dbReference>
<dbReference type="GO" id="GO:0003735">
    <property type="term" value="F:structural constituent of ribosome"/>
    <property type="evidence" value="ECO:0000318"/>
    <property type="project" value="GO_Central"/>
</dbReference>
<dbReference type="GO" id="GO:0002181">
    <property type="term" value="P:cytoplasmic translation"/>
    <property type="evidence" value="ECO:0000318"/>
    <property type="project" value="GO_Central"/>
</dbReference>
<dbReference type="FunFam" id="4.10.950.10:FF:000002">
    <property type="entry name" value="60S ribosomal protein L2"/>
    <property type="match status" value="1"/>
</dbReference>
<dbReference type="FunFam" id="2.30.30.30:FF:000006">
    <property type="entry name" value="60S ribosomal protein L8"/>
    <property type="match status" value="1"/>
</dbReference>
<dbReference type="FunFam" id="2.40.50.140:FF:000581">
    <property type="entry name" value="Ribosomal protein L8"/>
    <property type="match status" value="1"/>
</dbReference>
<dbReference type="Gene3D" id="2.30.30.30">
    <property type="match status" value="1"/>
</dbReference>
<dbReference type="Gene3D" id="2.40.50.140">
    <property type="entry name" value="Nucleic acid-binding proteins"/>
    <property type="match status" value="1"/>
</dbReference>
<dbReference type="Gene3D" id="4.10.950.10">
    <property type="entry name" value="Ribosomal protein L2, domain 3"/>
    <property type="match status" value="1"/>
</dbReference>
<dbReference type="HAMAP" id="MF_01320_A">
    <property type="entry name" value="Ribosomal_uL2_A"/>
    <property type="match status" value="1"/>
</dbReference>
<dbReference type="InterPro" id="IPR012340">
    <property type="entry name" value="NA-bd_OB-fold"/>
</dbReference>
<dbReference type="InterPro" id="IPR014722">
    <property type="entry name" value="Rib_uL2_dom2"/>
</dbReference>
<dbReference type="InterPro" id="IPR002171">
    <property type="entry name" value="Ribosomal_uL2"/>
</dbReference>
<dbReference type="InterPro" id="IPR023672">
    <property type="entry name" value="Ribosomal_uL2_arc_euk"/>
</dbReference>
<dbReference type="InterPro" id="IPR022669">
    <property type="entry name" value="Ribosomal_uL2_C"/>
</dbReference>
<dbReference type="InterPro" id="IPR022671">
    <property type="entry name" value="Ribosomal_uL2_CS"/>
</dbReference>
<dbReference type="InterPro" id="IPR014726">
    <property type="entry name" value="Ribosomal_uL2_dom3"/>
</dbReference>
<dbReference type="InterPro" id="IPR022666">
    <property type="entry name" value="Ribosomal_uL2_RNA-bd_dom"/>
</dbReference>
<dbReference type="InterPro" id="IPR008991">
    <property type="entry name" value="Translation_prot_SH3-like_sf"/>
</dbReference>
<dbReference type="NCBIfam" id="NF007180">
    <property type="entry name" value="PRK09612.1"/>
    <property type="match status" value="1"/>
</dbReference>
<dbReference type="PANTHER" id="PTHR13691:SF16">
    <property type="entry name" value="LARGE RIBOSOMAL SUBUNIT PROTEIN UL2"/>
    <property type="match status" value="1"/>
</dbReference>
<dbReference type="PANTHER" id="PTHR13691">
    <property type="entry name" value="RIBOSOMAL PROTEIN L2"/>
    <property type="match status" value="1"/>
</dbReference>
<dbReference type="Pfam" id="PF00181">
    <property type="entry name" value="Ribosomal_L2"/>
    <property type="match status" value="1"/>
</dbReference>
<dbReference type="Pfam" id="PF03947">
    <property type="entry name" value="Ribosomal_L2_C"/>
    <property type="match status" value="1"/>
</dbReference>
<dbReference type="PIRSF" id="PIRSF002158">
    <property type="entry name" value="Ribosomal_L2"/>
    <property type="match status" value="1"/>
</dbReference>
<dbReference type="SMART" id="SM01383">
    <property type="entry name" value="Ribosomal_L2"/>
    <property type="match status" value="1"/>
</dbReference>
<dbReference type="SMART" id="SM01382">
    <property type="entry name" value="Ribosomal_L2_C"/>
    <property type="match status" value="1"/>
</dbReference>
<dbReference type="SUPFAM" id="SSF50249">
    <property type="entry name" value="Nucleic acid-binding proteins"/>
    <property type="match status" value="1"/>
</dbReference>
<dbReference type="SUPFAM" id="SSF50104">
    <property type="entry name" value="Translation proteins SH3-like domain"/>
    <property type="match status" value="1"/>
</dbReference>
<dbReference type="PROSITE" id="PS00467">
    <property type="entry name" value="RIBOSOMAL_L2"/>
    <property type="match status" value="1"/>
</dbReference>
<feature type="initiator methionine" description="Removed" evidence="1">
    <location>
        <position position="1"/>
    </location>
</feature>
<feature type="chain" id="PRO_0000129749" description="Large ribosomal subunit protein uL2">
    <location>
        <begin position="2"/>
        <end position="257"/>
    </location>
</feature>
<feature type="region of interest" description="Disordered" evidence="3">
    <location>
        <begin position="207"/>
        <end position="230"/>
    </location>
</feature>
<sequence length="257" mass="28067">MGRVIRGQRKGAGSVFKAHVKHRKGAAKLRHIDFAERHGYIKGIVKDIIHDPGRGAPLAKVMFRDPYRFKKRTELFIAAEGIHTGQFIYCGKKAQLNIGNVLPVGTMPEGTIVCCLEEKPGDRGKLARASGNYATVISHNPETKKSRVKLPSGSKKVISSANRAVVGVVAGGGRIDKPILKAGRAYHKYKAKRNCWPRVRGVAMNPVEHPFGGGNHQHIGKPSTIRRDAPAGRKVGLIAARRTGRLRGTKTVQDKEN</sequence>
<organism>
    <name type="scientific">Danio rerio</name>
    <name type="common">Zebrafish</name>
    <name type="synonym">Brachydanio rerio</name>
    <dbReference type="NCBI Taxonomy" id="7955"/>
    <lineage>
        <taxon>Eukaryota</taxon>
        <taxon>Metazoa</taxon>
        <taxon>Chordata</taxon>
        <taxon>Craniata</taxon>
        <taxon>Vertebrata</taxon>
        <taxon>Euteleostomi</taxon>
        <taxon>Actinopterygii</taxon>
        <taxon>Neopterygii</taxon>
        <taxon>Teleostei</taxon>
        <taxon>Ostariophysi</taxon>
        <taxon>Cypriniformes</taxon>
        <taxon>Danionidae</taxon>
        <taxon>Danioninae</taxon>
        <taxon>Danio</taxon>
    </lineage>
</organism>
<evidence type="ECO:0000250" key="1"/>
<evidence type="ECO:0000250" key="2">
    <source>
        <dbReference type="UniProtKB" id="P62917"/>
    </source>
</evidence>
<evidence type="ECO:0000256" key="3">
    <source>
        <dbReference type="SAM" id="MobiDB-lite"/>
    </source>
</evidence>
<evidence type="ECO:0000305" key="4"/>
<name>RL8_DANRE</name>
<keyword id="KW-0002">3D-structure</keyword>
<keyword id="KW-0963">Cytoplasm</keyword>
<keyword id="KW-1185">Reference proteome</keyword>
<keyword id="KW-0687">Ribonucleoprotein</keyword>
<keyword id="KW-0689">Ribosomal protein</keyword>
<keyword id="KW-0694">RNA-binding</keyword>
<keyword id="KW-0699">rRNA-binding</keyword>
<gene>
    <name type="primary">rpl8</name>
    <name type="ORF">zgc:73105</name>
</gene>
<accession>Q6P0V6</accession>
<protein>
    <recommendedName>
        <fullName evidence="4">Large ribosomal subunit protein uL2</fullName>
    </recommendedName>
    <alternativeName>
        <fullName>60S ribosomal protein L8</fullName>
    </alternativeName>
</protein>
<proteinExistence type="evidence at protein level"/>